<reference key="1">
    <citation type="journal article" date="2009" name="ISME J.">
        <title>The genome sequence of the psychrophilic archaeon, Methanococcoides burtonii: the role of genome evolution in cold adaptation.</title>
        <authorList>
            <person name="Allen M.A."/>
            <person name="Lauro F.M."/>
            <person name="Williams T.J."/>
            <person name="Burg D."/>
            <person name="Siddiqui K.S."/>
            <person name="De Francisci D."/>
            <person name="Chong K.W."/>
            <person name="Pilak O."/>
            <person name="Chew H.H."/>
            <person name="De Maere M.Z."/>
            <person name="Ting L."/>
            <person name="Katrib M."/>
            <person name="Ng C."/>
            <person name="Sowers K.R."/>
            <person name="Galperin M.Y."/>
            <person name="Anderson I.J."/>
            <person name="Ivanova N."/>
            <person name="Dalin E."/>
            <person name="Martinez M."/>
            <person name="Lapidus A."/>
            <person name="Hauser L."/>
            <person name="Land M."/>
            <person name="Thomas T."/>
            <person name="Cavicchioli R."/>
        </authorList>
    </citation>
    <scope>NUCLEOTIDE SEQUENCE [LARGE SCALE GENOMIC DNA]</scope>
    <source>
        <strain>DSM 6242 / NBRC 107633 / OCM 468 / ACE-M</strain>
    </source>
</reference>
<evidence type="ECO:0000255" key="1">
    <source>
        <dbReference type="HAMAP-Rule" id="MF_01909"/>
    </source>
</evidence>
<keyword id="KW-0238">DNA-binding</keyword>
<keyword id="KW-0804">Transcription</keyword>
<keyword id="KW-0805">Transcription regulation</keyword>
<accession>Q12YV9</accession>
<comment type="function">
    <text evidence="1">Transcription factor that plays a role in the activation of archaeal genes transcribed by RNA polymerase. Facilitates transcription initiation by enhancing TATA-box recognition by TATA-box-binding protein (Tbp), and transcription factor B (Tfb) and RNA polymerase recruitment. Not absolutely required for transcription in vitro, but particularly important in cases where Tbp or Tfb function is not optimal. It dynamically alters the nucleic acid-binding properties of RNA polymerases by stabilizing the initiation complex and destabilizing elongation complexes. Seems to translocate with the RNA polymerase following initiation and acts by binding to the non template strand of the transcription bubble in elongation complexes.</text>
</comment>
<comment type="subunit">
    <text evidence="1">Monomer. Interaction with RNA polymerase subunits RpoF and RpoE is necessary for Tfe stimulatory transcription activity. Able to interact with Tbp and RNA polymerase in the absence of DNA promoter. Interacts both with the preinitiation and elongation complexes.</text>
</comment>
<comment type="domain">
    <text evidence="1">The winged helix domain is involved in binding to DNA in the preinitiation complex.</text>
</comment>
<comment type="similarity">
    <text evidence="1">Belongs to the TFE family.</text>
</comment>
<dbReference type="EMBL" id="CP000300">
    <property type="protein sequence ID" value="ABE51367.1"/>
    <property type="molecule type" value="Genomic_DNA"/>
</dbReference>
<dbReference type="RefSeq" id="WP_011498529.1">
    <property type="nucleotide sequence ID" value="NC_007955.1"/>
</dbReference>
<dbReference type="SMR" id="Q12YV9"/>
<dbReference type="STRING" id="259564.Mbur_0372"/>
<dbReference type="GeneID" id="3997585"/>
<dbReference type="KEGG" id="mbu:Mbur_0372"/>
<dbReference type="HOGENOM" id="CLU_100097_0_0_2"/>
<dbReference type="OrthoDB" id="5935at2157"/>
<dbReference type="Proteomes" id="UP000001979">
    <property type="component" value="Chromosome"/>
</dbReference>
<dbReference type="GO" id="GO:0003677">
    <property type="term" value="F:DNA binding"/>
    <property type="evidence" value="ECO:0007669"/>
    <property type="project" value="UniProtKB-KW"/>
</dbReference>
<dbReference type="GO" id="GO:0006355">
    <property type="term" value="P:regulation of DNA-templated transcription"/>
    <property type="evidence" value="ECO:0007669"/>
    <property type="project" value="InterPro"/>
</dbReference>
<dbReference type="GO" id="GO:0006367">
    <property type="term" value="P:transcription initiation at RNA polymerase II promoter"/>
    <property type="evidence" value="ECO:0007669"/>
    <property type="project" value="InterPro"/>
</dbReference>
<dbReference type="Gene3D" id="1.10.10.10">
    <property type="entry name" value="Winged helix-like DNA-binding domain superfamily/Winged helix DNA-binding domain"/>
    <property type="match status" value="1"/>
</dbReference>
<dbReference type="HAMAP" id="MF_01909">
    <property type="entry name" value="TFE_arch"/>
    <property type="match status" value="1"/>
</dbReference>
<dbReference type="InterPro" id="IPR016481">
    <property type="entry name" value="TF_E_archaea"/>
</dbReference>
<dbReference type="InterPro" id="IPR017919">
    <property type="entry name" value="TFIIE/TFIIEa_HTH"/>
</dbReference>
<dbReference type="InterPro" id="IPR002853">
    <property type="entry name" value="TFIIE_asu"/>
</dbReference>
<dbReference type="InterPro" id="IPR024550">
    <property type="entry name" value="TFIIEa/SarR/Rpc3_HTH_dom"/>
</dbReference>
<dbReference type="InterPro" id="IPR036388">
    <property type="entry name" value="WH-like_DNA-bd_sf"/>
</dbReference>
<dbReference type="InterPro" id="IPR036390">
    <property type="entry name" value="WH_DNA-bd_sf"/>
</dbReference>
<dbReference type="Pfam" id="PF02002">
    <property type="entry name" value="TFIIE_alpha"/>
    <property type="match status" value="1"/>
</dbReference>
<dbReference type="PIRSF" id="PIRSF006373">
    <property type="entry name" value="TF_E_archaea"/>
    <property type="match status" value="1"/>
</dbReference>
<dbReference type="SMART" id="SM00531">
    <property type="entry name" value="TFIIE"/>
    <property type="match status" value="1"/>
</dbReference>
<dbReference type="SUPFAM" id="SSF46785">
    <property type="entry name" value="Winged helix' DNA-binding domain"/>
    <property type="match status" value="1"/>
</dbReference>
<dbReference type="PROSITE" id="PS51344">
    <property type="entry name" value="HTH_TFE_IIE"/>
    <property type="match status" value="1"/>
</dbReference>
<protein>
    <recommendedName>
        <fullName evidence="1">Transcription factor E</fullName>
        <shortName evidence="1">TFE</shortName>
    </recommendedName>
    <alternativeName>
        <fullName evidence="1">TFIIE subunit alpha homolog</fullName>
    </alternativeName>
    <alternativeName>
        <fullName evidence="1">Transcription initiation factor TFIIE</fullName>
    </alternativeName>
</protein>
<sequence length="165" mass="19042">MTDSNDPVVRGYLLQLIGEEGIEMIENMPEGEVTDEQIAEASGVMLNIVRRTLFIMNENNLAVCRRERDSSSGWLTYLWQLDLSDIESHLVKEKKRITKNLEIRYNFEVDSVFYTCPEGCVRFEFKEASKCEFMCPACGEDMMFEDNSVMVKKLRDRLDALEASS</sequence>
<name>TFE_METBU</name>
<gene>
    <name evidence="1" type="primary">tfe</name>
    <name type="ordered locus">Mbur_0372</name>
</gene>
<proteinExistence type="inferred from homology"/>
<organism>
    <name type="scientific">Methanococcoides burtonii (strain DSM 6242 / NBRC 107633 / OCM 468 / ACE-M)</name>
    <dbReference type="NCBI Taxonomy" id="259564"/>
    <lineage>
        <taxon>Archaea</taxon>
        <taxon>Methanobacteriati</taxon>
        <taxon>Methanobacteriota</taxon>
        <taxon>Stenosarchaea group</taxon>
        <taxon>Methanomicrobia</taxon>
        <taxon>Methanosarcinales</taxon>
        <taxon>Methanosarcinaceae</taxon>
        <taxon>Methanococcoides</taxon>
    </lineage>
</organism>
<feature type="chain" id="PRO_0000326597" description="Transcription factor E">
    <location>
        <begin position="1"/>
        <end position="165"/>
    </location>
</feature>
<feature type="domain" description="HTH TFE/IIEalpha-type" evidence="1">
    <location>
        <begin position="5"/>
        <end position="87"/>
    </location>
</feature>